<gene>
    <name type="primary">nosZ</name>
    <name type="ordered locus">RA0643</name>
    <name type="ORF">SMa1182</name>
</gene>
<evidence type="ECO:0000250" key="1"/>
<evidence type="ECO:0000255" key="2"/>
<evidence type="ECO:0000305" key="3"/>
<dbReference type="EC" id="1.7.2.4"/>
<dbReference type="EMBL" id="U47133">
    <property type="protein sequence ID" value="AAC44023.1"/>
    <property type="molecule type" value="Genomic_DNA"/>
</dbReference>
<dbReference type="EMBL" id="AE006469">
    <property type="protein sequence ID" value="AAK65301.1"/>
    <property type="molecule type" value="Genomic_DNA"/>
</dbReference>
<dbReference type="PIR" id="C95342">
    <property type="entry name" value="C95342"/>
</dbReference>
<dbReference type="RefSeq" id="NP_435889.1">
    <property type="nucleotide sequence ID" value="NC_003037.1"/>
</dbReference>
<dbReference type="RefSeq" id="WP_010967622.1">
    <property type="nucleotide sequence ID" value="NC_003037.1"/>
</dbReference>
<dbReference type="SMR" id="Q59746"/>
<dbReference type="EnsemblBacteria" id="AAK65301">
    <property type="protein sequence ID" value="AAK65301"/>
    <property type="gene ID" value="SMa1182"/>
</dbReference>
<dbReference type="GeneID" id="89572434"/>
<dbReference type="KEGG" id="sme:SMa1182"/>
<dbReference type="PATRIC" id="fig|266834.11.peg.663"/>
<dbReference type="HOGENOM" id="CLU_016420_0_0_5"/>
<dbReference type="OrthoDB" id="9759695at2"/>
<dbReference type="UniPathway" id="UPA00652">
    <property type="reaction ID" value="UER00709"/>
</dbReference>
<dbReference type="Proteomes" id="UP000001976">
    <property type="component" value="Plasmid pSymA"/>
</dbReference>
<dbReference type="GO" id="GO:0016020">
    <property type="term" value="C:membrane"/>
    <property type="evidence" value="ECO:0007669"/>
    <property type="project" value="InterPro"/>
</dbReference>
<dbReference type="GO" id="GO:0042597">
    <property type="term" value="C:periplasmic space"/>
    <property type="evidence" value="ECO:0007669"/>
    <property type="project" value="UniProtKB-SubCell"/>
</dbReference>
<dbReference type="GO" id="GO:0005509">
    <property type="term" value="F:calcium ion binding"/>
    <property type="evidence" value="ECO:0007669"/>
    <property type="project" value="UniProtKB-UniRule"/>
</dbReference>
<dbReference type="GO" id="GO:0005507">
    <property type="term" value="F:copper ion binding"/>
    <property type="evidence" value="ECO:0007669"/>
    <property type="project" value="UniProtKB-UniRule"/>
</dbReference>
<dbReference type="GO" id="GO:0004129">
    <property type="term" value="F:cytochrome-c oxidase activity"/>
    <property type="evidence" value="ECO:0007669"/>
    <property type="project" value="InterPro"/>
</dbReference>
<dbReference type="GO" id="GO:0050304">
    <property type="term" value="F:nitrous-oxide reductase activity"/>
    <property type="evidence" value="ECO:0007669"/>
    <property type="project" value="UniProtKB-UniRule"/>
</dbReference>
<dbReference type="GO" id="GO:0019333">
    <property type="term" value="P:denitrification pathway"/>
    <property type="evidence" value="ECO:0007669"/>
    <property type="project" value="UniProtKB-UniPathway"/>
</dbReference>
<dbReference type="CDD" id="cd04223">
    <property type="entry name" value="N2OR_C"/>
    <property type="match status" value="1"/>
</dbReference>
<dbReference type="Gene3D" id="2.60.40.420">
    <property type="entry name" value="Cupredoxins - blue copper proteins"/>
    <property type="match status" value="1"/>
</dbReference>
<dbReference type="Gene3D" id="2.130.10.10">
    <property type="entry name" value="YVTN repeat-like/Quinoprotein amine dehydrogenase"/>
    <property type="match status" value="1"/>
</dbReference>
<dbReference type="HAMAP" id="MF_00716">
    <property type="entry name" value="NosZ"/>
    <property type="match status" value="1"/>
</dbReference>
<dbReference type="InterPro" id="IPR002429">
    <property type="entry name" value="CcO_II-like_C"/>
</dbReference>
<dbReference type="InterPro" id="IPR008972">
    <property type="entry name" value="Cupredoxin"/>
</dbReference>
<dbReference type="InterPro" id="IPR028096">
    <property type="entry name" value="EfeO_Cupredoxin"/>
</dbReference>
<dbReference type="InterPro" id="IPR011045">
    <property type="entry name" value="N2O_reductase_N"/>
</dbReference>
<dbReference type="InterPro" id="IPR034205">
    <property type="entry name" value="N2OR_C"/>
</dbReference>
<dbReference type="InterPro" id="IPR023644">
    <property type="entry name" value="NO_Rdtase"/>
</dbReference>
<dbReference type="InterPro" id="IPR041114">
    <property type="entry name" value="Nos_propeller"/>
</dbReference>
<dbReference type="InterPro" id="IPR041142">
    <property type="entry name" value="NOS_propeller_2"/>
</dbReference>
<dbReference type="InterPro" id="IPR051403">
    <property type="entry name" value="NosZ/Cyto_c_oxidase_sub2"/>
</dbReference>
<dbReference type="InterPro" id="IPR006311">
    <property type="entry name" value="TAT_signal"/>
</dbReference>
<dbReference type="InterPro" id="IPR015943">
    <property type="entry name" value="WD40/YVTN_repeat-like_dom_sf"/>
</dbReference>
<dbReference type="NCBIfam" id="TIGR04244">
    <property type="entry name" value="nitrous_NosZ_RR"/>
    <property type="match status" value="1"/>
</dbReference>
<dbReference type="PANTHER" id="PTHR42838">
    <property type="entry name" value="CYTOCHROME C OXIDASE SUBUNIT II"/>
    <property type="match status" value="1"/>
</dbReference>
<dbReference type="PANTHER" id="PTHR42838:SF2">
    <property type="entry name" value="NITROUS-OXIDE REDUCTASE"/>
    <property type="match status" value="1"/>
</dbReference>
<dbReference type="Pfam" id="PF13473">
    <property type="entry name" value="Cupredoxin_1"/>
    <property type="match status" value="1"/>
</dbReference>
<dbReference type="Pfam" id="PF18764">
    <property type="entry name" value="nos_propeller"/>
    <property type="match status" value="1"/>
</dbReference>
<dbReference type="Pfam" id="PF18793">
    <property type="entry name" value="nos_propeller_2"/>
    <property type="match status" value="1"/>
</dbReference>
<dbReference type="SUPFAM" id="SSF49503">
    <property type="entry name" value="Cupredoxins"/>
    <property type="match status" value="1"/>
</dbReference>
<dbReference type="SUPFAM" id="SSF50974">
    <property type="entry name" value="Nitrous oxide reductase, N-terminal domain"/>
    <property type="match status" value="1"/>
</dbReference>
<dbReference type="PROSITE" id="PS50857">
    <property type="entry name" value="COX2_CUA"/>
    <property type="match status" value="1"/>
</dbReference>
<dbReference type="PROSITE" id="PS51318">
    <property type="entry name" value="TAT"/>
    <property type="match status" value="1"/>
</dbReference>
<reference key="1">
    <citation type="journal article" date="1996" name="J. Bacteriol.">
        <title>Identification and analysis of the dissimilatory nitrous oxide reduction genes, nosRZDFY, of Rhizobium meliloti.</title>
        <authorList>
            <person name="Holloway P."/>
            <person name="McCormick W."/>
            <person name="Watson R.J."/>
            <person name="Chan Y.K."/>
        </authorList>
    </citation>
    <scope>NUCLEOTIDE SEQUENCE [GENOMIC DNA]</scope>
    <source>
        <strain>JJ1c10</strain>
    </source>
</reference>
<reference key="2">
    <citation type="journal article" date="2001" name="Proc. Natl. Acad. Sci. U.S.A.">
        <title>Nucleotide sequence and predicted functions of the entire Sinorhizobium meliloti pSymA megaplasmid.</title>
        <authorList>
            <person name="Barnett M.J."/>
            <person name="Fisher R.F."/>
            <person name="Jones T."/>
            <person name="Komp C."/>
            <person name="Abola A.P."/>
            <person name="Barloy-Hubler F."/>
            <person name="Bowser L."/>
            <person name="Capela D."/>
            <person name="Galibert F."/>
            <person name="Gouzy J."/>
            <person name="Gurjal M."/>
            <person name="Hong A."/>
            <person name="Huizar L."/>
            <person name="Hyman R.W."/>
            <person name="Kahn D."/>
            <person name="Kahn M.L."/>
            <person name="Kalman S."/>
            <person name="Keating D.H."/>
            <person name="Palm C."/>
            <person name="Peck M.C."/>
            <person name="Surzycki R."/>
            <person name="Wells D.H."/>
            <person name="Yeh K.-C."/>
            <person name="Davis R.W."/>
            <person name="Federspiel N.A."/>
            <person name="Long S.R."/>
        </authorList>
    </citation>
    <scope>NUCLEOTIDE SEQUENCE [LARGE SCALE GENOMIC DNA]</scope>
    <source>
        <strain>1021</strain>
    </source>
</reference>
<reference key="3">
    <citation type="journal article" date="2001" name="Science">
        <title>The composite genome of the legume symbiont Sinorhizobium meliloti.</title>
        <authorList>
            <person name="Galibert F."/>
            <person name="Finan T.M."/>
            <person name="Long S.R."/>
            <person name="Puehler A."/>
            <person name="Abola P."/>
            <person name="Ampe F."/>
            <person name="Barloy-Hubler F."/>
            <person name="Barnett M.J."/>
            <person name="Becker A."/>
            <person name="Boistard P."/>
            <person name="Bothe G."/>
            <person name="Boutry M."/>
            <person name="Bowser L."/>
            <person name="Buhrmester J."/>
            <person name="Cadieu E."/>
            <person name="Capela D."/>
            <person name="Chain P."/>
            <person name="Cowie A."/>
            <person name="Davis R.W."/>
            <person name="Dreano S."/>
            <person name="Federspiel N.A."/>
            <person name="Fisher R.F."/>
            <person name="Gloux S."/>
            <person name="Godrie T."/>
            <person name="Goffeau A."/>
            <person name="Golding B."/>
            <person name="Gouzy J."/>
            <person name="Gurjal M."/>
            <person name="Hernandez-Lucas I."/>
            <person name="Hong A."/>
            <person name="Huizar L."/>
            <person name="Hyman R.W."/>
            <person name="Jones T."/>
            <person name="Kahn D."/>
            <person name="Kahn M.L."/>
            <person name="Kalman S."/>
            <person name="Keating D.H."/>
            <person name="Kiss E."/>
            <person name="Komp C."/>
            <person name="Lelaure V."/>
            <person name="Masuy D."/>
            <person name="Palm C."/>
            <person name="Peck M.C."/>
            <person name="Pohl T.M."/>
            <person name="Portetelle D."/>
            <person name="Purnelle B."/>
            <person name="Ramsperger U."/>
            <person name="Surzycki R."/>
            <person name="Thebault P."/>
            <person name="Vandenbol M."/>
            <person name="Vorhoelter F.J."/>
            <person name="Weidner S."/>
            <person name="Wells D.H."/>
            <person name="Wong K."/>
            <person name="Yeh K.-C."/>
            <person name="Batut J."/>
        </authorList>
    </citation>
    <scope>NUCLEOTIDE SEQUENCE [LARGE SCALE GENOMIC DNA]</scope>
    <source>
        <strain>1021</strain>
    </source>
</reference>
<comment type="function">
    <text>Nitrous-oxide reductase is part of a bacterial respiratory system which is activated under anaerobic conditions in the presence of nitrate or nitrous oxide.</text>
</comment>
<comment type="catalytic activity">
    <reaction>
        <text>N2 + 2 Fe(III)-[cytochrome c] + H2O = nitrous oxide + 2 Fe(II)-[cytochrome c] + 2 H(+)</text>
        <dbReference type="Rhea" id="RHEA:43108"/>
        <dbReference type="Rhea" id="RHEA-COMP:10350"/>
        <dbReference type="Rhea" id="RHEA-COMP:14399"/>
        <dbReference type="ChEBI" id="CHEBI:15377"/>
        <dbReference type="ChEBI" id="CHEBI:15378"/>
        <dbReference type="ChEBI" id="CHEBI:17045"/>
        <dbReference type="ChEBI" id="CHEBI:17997"/>
        <dbReference type="ChEBI" id="CHEBI:29033"/>
        <dbReference type="ChEBI" id="CHEBI:29034"/>
        <dbReference type="EC" id="1.7.2.4"/>
    </reaction>
</comment>
<comment type="cofactor">
    <cofactor evidence="1">
        <name>Ca(2+)</name>
        <dbReference type="ChEBI" id="CHEBI:29108"/>
    </cofactor>
    <text evidence="1">Binds 2 calcium ions per subunit.</text>
</comment>
<comment type="cofactor">
    <cofactor evidence="1">
        <name>Cu cation</name>
        <dbReference type="ChEBI" id="CHEBI:23378"/>
    </cofactor>
    <text evidence="1">Binds 6 Cu cations per subunit. Each subunit contains 2 copper centers; Cu(A) (binuclear) and Cu(Z) (tetranuclear). Cu(Z) is thought to be the site of nitrous oxide reduction.</text>
</comment>
<comment type="pathway">
    <text>Nitrogen metabolism; nitrate reduction (denitrification); dinitrogen from nitrate: step 4/4.</text>
</comment>
<comment type="subunit">
    <text evidence="1">Homodimer.</text>
</comment>
<comment type="subcellular location">
    <subcellularLocation>
        <location evidence="1">Periplasm</location>
    </subcellularLocation>
</comment>
<comment type="PTM">
    <text>Predicted to be exported by the Tat system. The position of the signal peptide cleavage has not been experimentally proven.</text>
</comment>
<comment type="similarity">
    <text evidence="3">Belongs to the NosZ family.</text>
</comment>
<comment type="similarity">
    <text evidence="3">In the C-terminal section; belongs to the cytochrome c oxidase subunit 2 family.</text>
</comment>
<protein>
    <recommendedName>
        <fullName>Nitrous-oxide reductase</fullName>
        <ecNumber>1.7.2.4</ecNumber>
    </recommendedName>
    <alternativeName>
        <fullName>N(2)OR</fullName>
    </alternativeName>
    <alternativeName>
        <fullName>N2O reductase</fullName>
    </alternativeName>
</protein>
<proteinExistence type="inferred from homology"/>
<sequence length="639" mass="70760">MSNEETKMRLNRRQMLGTTAFMAAAGAVGAGGALTLSGGTATPARAQETSGSSYEVKPGELDEYYVFFSSGQSGEIRIVGAPSMREMMRIPVFNRCSATGWGQTNESRKVMTEGLLPETVEFLKDQGGLYLNGDLHHPHPSFTDGTYDGRYLYANDKSNSRVCRIRLDVMKCDKIIQLPNQHTVHGLRVQKYPKTGYVFCNGEDAVPVPNDGKTMGDKNSYQAIFTAVDGETMEVAWQVMVDGNLDNVDADYQGKYCFATCYNSEEGFTLADMMASEQDWVVIFNLKRIEEAVAKGDYKEIGGVPVLDGRKGSPYTRYVPVPNSPHGINTAPDGIHVVANGKLSPTVTVFDVRKFDDLFDDKIQARDTVVAEPELGLGPLHTAYDGKGNAYTTLFIDSQVCKWNIEDAKRAYAGEKVDPIRHKLDVHYQPGHNHTSMGQTKEADGKWLISLNKFSKDRYLNVGPLKPENDQLIDISGDEMVLVHDNPTFAEPHDATIVHASKINPVHVWNRDDPFFADAVAQAKADNIDLMVDSEVIRDGNKVRVYMTSAAPAFGLDDFTVKQGDEVTVYVTNIDEVEDLTHGFCIVNYGINMEVAPQATASVTFKASRPGVYWYYCTWFCHAMHMEMKGRMLVEAQGA</sequence>
<geneLocation type="plasmid">
    <name>pSymA</name>
    <name>megaplasmid 1</name>
</geneLocation>
<keyword id="KW-0106">Calcium</keyword>
<keyword id="KW-0186">Copper</keyword>
<keyword id="KW-0479">Metal-binding</keyword>
<keyword id="KW-0560">Oxidoreductase</keyword>
<keyword id="KW-0574">Periplasm</keyword>
<keyword id="KW-0614">Plasmid</keyword>
<keyword id="KW-1185">Reference proteome</keyword>
<keyword id="KW-0732">Signal</keyword>
<accession>Q59746</accession>
<organism>
    <name type="scientific">Rhizobium meliloti (strain 1021)</name>
    <name type="common">Ensifer meliloti</name>
    <name type="synonym">Sinorhizobium meliloti</name>
    <dbReference type="NCBI Taxonomy" id="266834"/>
    <lineage>
        <taxon>Bacteria</taxon>
        <taxon>Pseudomonadati</taxon>
        <taxon>Pseudomonadota</taxon>
        <taxon>Alphaproteobacteria</taxon>
        <taxon>Hyphomicrobiales</taxon>
        <taxon>Rhizobiaceae</taxon>
        <taxon>Sinorhizobium/Ensifer group</taxon>
        <taxon>Sinorhizobium</taxon>
    </lineage>
</organism>
<feature type="signal peptide" description="Tat-type signal" evidence="2">
    <location>
        <begin position="1"/>
        <end position="46"/>
    </location>
</feature>
<feature type="chain" id="PRO_0000019833" description="Nitrous-oxide reductase">
    <location>
        <begin position="47"/>
        <end position="639"/>
    </location>
</feature>
<feature type="region of interest" description="COX2-like">
    <location>
        <begin position="541"/>
        <end position="639"/>
    </location>
</feature>
<feature type="binding site" evidence="1">
    <location>
        <position position="136"/>
    </location>
    <ligand>
        <name>Cu cation</name>
        <dbReference type="ChEBI" id="CHEBI:23378"/>
        <label>Z2</label>
    </ligand>
</feature>
<feature type="binding site" evidence="1">
    <location>
        <position position="137"/>
    </location>
    <ligand>
        <name>Cu cation</name>
        <dbReference type="ChEBI" id="CHEBI:23378"/>
        <label>Z3</label>
    </ligand>
</feature>
<feature type="binding site" evidence="1">
    <location>
        <position position="185"/>
    </location>
    <ligand>
        <name>Cu cation</name>
        <dbReference type="ChEBI" id="CHEBI:23378"/>
        <label>Z2</label>
    </ligand>
</feature>
<feature type="binding site" evidence="1">
    <location>
        <position position="262"/>
    </location>
    <ligand>
        <name>Ca(2+)</name>
        <dbReference type="ChEBI" id="CHEBI:29108"/>
        <label>2</label>
    </ligand>
</feature>
<feature type="binding site" evidence="1">
    <location>
        <position position="265"/>
    </location>
    <ligand>
        <name>Ca(2+)</name>
        <dbReference type="ChEBI" id="CHEBI:29108"/>
        <label>2</label>
    </ligand>
</feature>
<feature type="binding site" evidence="1">
    <location>
        <position position="273"/>
    </location>
    <ligand>
        <name>Ca(2+)</name>
        <dbReference type="ChEBI" id="CHEBI:29108"/>
        <label>2</label>
    </ligand>
</feature>
<feature type="binding site" evidence="1">
    <location>
        <position position="279"/>
    </location>
    <ligand>
        <name>Ca(2+)</name>
        <dbReference type="ChEBI" id="CHEBI:29108"/>
        <label>2</label>
    </ligand>
</feature>
<feature type="binding site" evidence="1">
    <location>
        <position position="324"/>
    </location>
    <ligand>
        <name>Ca(2+)</name>
        <dbReference type="ChEBI" id="CHEBI:29108"/>
        <label>2</label>
    </ligand>
</feature>
<feature type="binding site" evidence="1">
    <location>
        <position position="326"/>
    </location>
    <ligand>
        <name>Cu cation</name>
        <dbReference type="ChEBI" id="CHEBI:23378"/>
        <label>Z1</label>
    </ligand>
</feature>
<feature type="binding site" evidence="1">
    <location>
        <position position="381"/>
    </location>
    <ligand>
        <name>Cu cation</name>
        <dbReference type="ChEBI" id="CHEBI:23378"/>
        <label>Z1</label>
    </ligand>
</feature>
<feature type="binding site" evidence="1">
    <location>
        <position position="432"/>
    </location>
    <ligand>
        <name>Cu cation</name>
        <dbReference type="ChEBI" id="CHEBI:23378"/>
        <label>Z3</label>
    </ligand>
</feature>
<feature type="binding site" evidence="1">
    <location>
        <position position="453"/>
    </location>
    <ligand>
        <name>Ca(2+)</name>
        <dbReference type="ChEBI" id="CHEBI:29108"/>
        <label>1</label>
    </ligand>
</feature>
<feature type="binding site" evidence="1">
    <location>
        <position position="468"/>
    </location>
    <ligand>
        <name>Ca(2+)</name>
        <dbReference type="ChEBI" id="CHEBI:29108"/>
        <label>1</label>
    </ligand>
</feature>
<feature type="binding site" evidence="1">
    <location>
        <position position="493"/>
    </location>
    <ligand>
        <name>Cu cation</name>
        <dbReference type="ChEBI" id="CHEBI:23378"/>
        <label>Z4</label>
    </ligand>
</feature>
<feature type="binding site" evidence="1">
    <location>
        <position position="582"/>
    </location>
    <ligand>
        <name>Cu cation</name>
        <dbReference type="ChEBI" id="CHEBI:23378"/>
        <label>A1</label>
    </ligand>
</feature>
<feature type="binding site" evidence="1">
    <location>
        <position position="617"/>
    </location>
    <ligand>
        <name>Cu cation</name>
        <dbReference type="ChEBI" id="CHEBI:23378"/>
        <label>A1</label>
    </ligand>
</feature>
<feature type="binding site" evidence="1">
    <location>
        <position position="617"/>
    </location>
    <ligand>
        <name>Cu cation</name>
        <dbReference type="ChEBI" id="CHEBI:23378"/>
        <label>A2</label>
    </ligand>
</feature>
<feature type="binding site" evidence="1">
    <location>
        <position position="619"/>
    </location>
    <ligand>
        <name>Cu cation</name>
        <dbReference type="ChEBI" id="CHEBI:23378"/>
        <label>A2</label>
    </ligand>
</feature>
<feature type="binding site" evidence="1">
    <location>
        <position position="621"/>
    </location>
    <ligand>
        <name>Cu cation</name>
        <dbReference type="ChEBI" id="CHEBI:23378"/>
        <label>A1</label>
    </ligand>
</feature>
<feature type="binding site" evidence="1">
    <location>
        <position position="621"/>
    </location>
    <ligand>
        <name>Cu cation</name>
        <dbReference type="ChEBI" id="CHEBI:23378"/>
        <label>A2</label>
    </ligand>
</feature>
<feature type="binding site" evidence="1">
    <location>
        <position position="625"/>
    </location>
    <ligand>
        <name>Cu cation</name>
        <dbReference type="ChEBI" id="CHEBI:23378"/>
        <label>A2</label>
    </ligand>
</feature>
<feature type="binding site" evidence="1">
    <location>
        <position position="628"/>
    </location>
    <ligand>
        <name>Cu cation</name>
        <dbReference type="ChEBI" id="CHEBI:23378"/>
        <label>A1</label>
    </ligand>
</feature>
<name>NOSZ_RHIME</name>